<organism>
    <name type="scientific">Escherichia coli O1:K1 / APEC</name>
    <dbReference type="NCBI Taxonomy" id="405955"/>
    <lineage>
        <taxon>Bacteria</taxon>
        <taxon>Pseudomonadati</taxon>
        <taxon>Pseudomonadota</taxon>
        <taxon>Gammaproteobacteria</taxon>
        <taxon>Enterobacterales</taxon>
        <taxon>Enterobacteriaceae</taxon>
        <taxon>Escherichia</taxon>
    </lineage>
</organism>
<accession>A1AGJ8</accession>
<comment type="function">
    <text evidence="1">One of two assembly initiator proteins, it binds directly to the 5'-end of the 23S rRNA, where it nucleates assembly of the 50S subunit.</text>
</comment>
<comment type="function">
    <text evidence="1">One of the proteins that surrounds the polypeptide exit tunnel on the outside of the subunit.</text>
</comment>
<comment type="subunit">
    <text evidence="1">Part of the 50S ribosomal subunit.</text>
</comment>
<comment type="similarity">
    <text evidence="1">Belongs to the universal ribosomal protein uL24 family.</text>
</comment>
<feature type="chain" id="PRO_1000052209" description="Large ribosomal subunit protein uL24">
    <location>
        <begin position="1"/>
        <end position="104"/>
    </location>
</feature>
<keyword id="KW-1185">Reference proteome</keyword>
<keyword id="KW-0687">Ribonucleoprotein</keyword>
<keyword id="KW-0689">Ribosomal protein</keyword>
<keyword id="KW-0694">RNA-binding</keyword>
<keyword id="KW-0699">rRNA-binding</keyword>
<name>RL24_ECOK1</name>
<protein>
    <recommendedName>
        <fullName evidence="1">Large ribosomal subunit protein uL24</fullName>
    </recommendedName>
    <alternativeName>
        <fullName evidence="2">50S ribosomal protein L24</fullName>
    </alternativeName>
</protein>
<gene>
    <name evidence="1" type="primary">rplX</name>
    <name type="ordered locus">Ecok1_32940</name>
    <name type="ORF">APECO1_3140</name>
</gene>
<evidence type="ECO:0000255" key="1">
    <source>
        <dbReference type="HAMAP-Rule" id="MF_01326"/>
    </source>
</evidence>
<evidence type="ECO:0000305" key="2"/>
<proteinExistence type="inferred from homology"/>
<sequence length="104" mass="11346">MAAKIRRDDEVIVLTGKDKGKRGKVKNVLSSGKVIVEGINLVKKHQKPVPALNQPGGIVEKEAAIQVSNVAIFNATTGKADRVGFRFEDGKKVRFFKSNSETIK</sequence>
<dbReference type="EMBL" id="CP000468">
    <property type="protein sequence ID" value="ABJ02788.1"/>
    <property type="molecule type" value="Genomic_DNA"/>
</dbReference>
<dbReference type="RefSeq" id="WP_000729186.1">
    <property type="nucleotide sequence ID" value="NZ_CADILS010000044.1"/>
</dbReference>
<dbReference type="SMR" id="A1AGJ8"/>
<dbReference type="KEGG" id="ecv:APECO1_3140"/>
<dbReference type="HOGENOM" id="CLU_093315_2_2_6"/>
<dbReference type="Proteomes" id="UP000008216">
    <property type="component" value="Chromosome"/>
</dbReference>
<dbReference type="GO" id="GO:0005829">
    <property type="term" value="C:cytosol"/>
    <property type="evidence" value="ECO:0007669"/>
    <property type="project" value="UniProtKB-ARBA"/>
</dbReference>
<dbReference type="GO" id="GO:1990904">
    <property type="term" value="C:ribonucleoprotein complex"/>
    <property type="evidence" value="ECO:0007669"/>
    <property type="project" value="UniProtKB-KW"/>
</dbReference>
<dbReference type="GO" id="GO:0005840">
    <property type="term" value="C:ribosome"/>
    <property type="evidence" value="ECO:0007669"/>
    <property type="project" value="UniProtKB-KW"/>
</dbReference>
<dbReference type="GO" id="GO:0019843">
    <property type="term" value="F:rRNA binding"/>
    <property type="evidence" value="ECO:0007669"/>
    <property type="project" value="UniProtKB-UniRule"/>
</dbReference>
<dbReference type="GO" id="GO:0003735">
    <property type="term" value="F:structural constituent of ribosome"/>
    <property type="evidence" value="ECO:0007669"/>
    <property type="project" value="InterPro"/>
</dbReference>
<dbReference type="GO" id="GO:0006412">
    <property type="term" value="P:translation"/>
    <property type="evidence" value="ECO:0007669"/>
    <property type="project" value="UniProtKB-UniRule"/>
</dbReference>
<dbReference type="CDD" id="cd06089">
    <property type="entry name" value="KOW_RPL26"/>
    <property type="match status" value="1"/>
</dbReference>
<dbReference type="FunFam" id="2.30.30.30:FF:000004">
    <property type="entry name" value="50S ribosomal protein L24"/>
    <property type="match status" value="1"/>
</dbReference>
<dbReference type="Gene3D" id="2.30.30.30">
    <property type="match status" value="1"/>
</dbReference>
<dbReference type="HAMAP" id="MF_01326_B">
    <property type="entry name" value="Ribosomal_uL24_B"/>
    <property type="match status" value="1"/>
</dbReference>
<dbReference type="InterPro" id="IPR005824">
    <property type="entry name" value="KOW"/>
</dbReference>
<dbReference type="InterPro" id="IPR014722">
    <property type="entry name" value="Rib_uL2_dom2"/>
</dbReference>
<dbReference type="InterPro" id="IPR003256">
    <property type="entry name" value="Ribosomal_uL24"/>
</dbReference>
<dbReference type="InterPro" id="IPR005825">
    <property type="entry name" value="Ribosomal_uL24_CS"/>
</dbReference>
<dbReference type="InterPro" id="IPR041988">
    <property type="entry name" value="Ribosomal_uL24_KOW"/>
</dbReference>
<dbReference type="InterPro" id="IPR008991">
    <property type="entry name" value="Translation_prot_SH3-like_sf"/>
</dbReference>
<dbReference type="NCBIfam" id="TIGR01079">
    <property type="entry name" value="rplX_bact"/>
    <property type="match status" value="1"/>
</dbReference>
<dbReference type="PANTHER" id="PTHR12903">
    <property type="entry name" value="MITOCHONDRIAL RIBOSOMAL PROTEIN L24"/>
    <property type="match status" value="1"/>
</dbReference>
<dbReference type="Pfam" id="PF00467">
    <property type="entry name" value="KOW"/>
    <property type="match status" value="1"/>
</dbReference>
<dbReference type="Pfam" id="PF17136">
    <property type="entry name" value="ribosomal_L24"/>
    <property type="match status" value="1"/>
</dbReference>
<dbReference type="SMART" id="SM00739">
    <property type="entry name" value="KOW"/>
    <property type="match status" value="1"/>
</dbReference>
<dbReference type="SUPFAM" id="SSF50104">
    <property type="entry name" value="Translation proteins SH3-like domain"/>
    <property type="match status" value="1"/>
</dbReference>
<dbReference type="PROSITE" id="PS01108">
    <property type="entry name" value="RIBOSOMAL_L24"/>
    <property type="match status" value="1"/>
</dbReference>
<reference key="1">
    <citation type="journal article" date="2007" name="J. Bacteriol.">
        <title>The genome sequence of avian pathogenic Escherichia coli strain O1:K1:H7 shares strong similarities with human extraintestinal pathogenic E. coli genomes.</title>
        <authorList>
            <person name="Johnson T.J."/>
            <person name="Kariyawasam S."/>
            <person name="Wannemuehler Y."/>
            <person name="Mangiamele P."/>
            <person name="Johnson S.J."/>
            <person name="Doetkott C."/>
            <person name="Skyberg J.A."/>
            <person name="Lynne A.M."/>
            <person name="Johnson J.R."/>
            <person name="Nolan L.K."/>
        </authorList>
    </citation>
    <scope>NUCLEOTIDE SEQUENCE [LARGE SCALE GENOMIC DNA]</scope>
</reference>